<proteinExistence type="inferred from homology"/>
<organism>
    <name type="scientific">Geobacillus thermodenitrificans (strain NG80-2)</name>
    <dbReference type="NCBI Taxonomy" id="420246"/>
    <lineage>
        <taxon>Bacteria</taxon>
        <taxon>Bacillati</taxon>
        <taxon>Bacillota</taxon>
        <taxon>Bacilli</taxon>
        <taxon>Bacillales</taxon>
        <taxon>Anoxybacillaceae</taxon>
        <taxon>Geobacillus</taxon>
    </lineage>
</organism>
<sequence length="1242" mass="141543">MNATFRPKPAGSRWTDEQWKAIAAGGRDILVAAAAGSGKTAVLVERIIQKVTAEEGAVDIDRLLVVTFTNAAAAEMKARIGEALERELANRPHSLHLRRQLSLLNRASISTLHSFCLDVIRKYYYLLDLDPSFRIADETEIELLKEDVLEELLEEEYGKADNERFFAVVDAYTGDRSDAELQEMILALYEFSRSHPAPDEWLADLVSMYDVDEQTNVETLPPARYIAQHAAMELAAAKRFIGLALALAEKESGPKPYEKRLREDMDLIADLERRLSGSWDELYHALQSLSFGRLPPCRGDGFDAELIDEAKSLRDQAKKKIEALRDNVFSLHPSAWLRHMREMKPVVETIAALVRRFSAMFEAAKREKGIVDFSDLEHYCLRILRQYDPETGEWQPSSAALEYQAQFDEVLVDEYQDTNLVQETILQLVKKGSERTGNLFMVGDVKQSIYRFRLAEPMLFLDKYKRFTADGEAGGMKIDLASNFRSRAEVLDGTNFLFAQIMGEAVGEMVYDEAAQLKYGADYPEGTDAVPEVMIIDRQRTSEEDEEETAELEAAELESRLMAEKIKEIVSRPFYVYDRSSGQQRRAMYRDIVVLVRSMTNAPQMIEQLQAQGIPAAADLSSGYFQATEISVMLSLLKVIDNPYQDIPLAAVLRSPLFRFDENELAMIRLSDPKGTFFEALQAFCQKTAETGEEENAKEKAISFLNKLEEWRTMARRRSLADLIWQLYRDTQFYDFVGALPGGKQRQANLRALYDRARQYESTSFRGLFRFLRFIERLQERGDDLGAARPLGDQEDVVRVMTIHSSKGLEFPIVFLVGLARPFYTRDLHSPYLLDKELGFAARFVHPRLRISYPTLPLLAIQVKKRLELLAEEMRILYVALTRAKEKLYLLASVNDADKEIEKWKGVAAESGWLLPDDVRASARSYLDWIGRALIRHRDGRSLVEVNRPDEIASHPSVWRFEIVSAAKLRNAEVSTDREDGGALVALEQGRPVPTQGEWEEEARRRLLWRYRYGKETVVRAKQSVSELKEQQALFGEQADEWLPRKGTAPLFSRPRFMQEKTLTPAEKGTALHVVMRHLDLHAPMDESSIRSQIIRLVEKELLSAEQAETVDAAAIVAFFATDIGRRLCAAREVYREVPFSLGLPADELYGSEGMESGRRLLVQGVVDCVFADERGYVVIDYKTDEVTGRFAGQKEEATRFLLGRYGGQMRLYRRAIEQIWRVPVAECYLYSFDGEYFLAVE</sequence>
<keyword id="KW-0067">ATP-binding</keyword>
<keyword id="KW-0227">DNA damage</keyword>
<keyword id="KW-0234">DNA repair</keyword>
<keyword id="KW-0238">DNA-binding</keyword>
<keyword id="KW-0269">Exonuclease</keyword>
<keyword id="KW-0347">Helicase</keyword>
<keyword id="KW-0378">Hydrolase</keyword>
<keyword id="KW-0413">Isomerase</keyword>
<keyword id="KW-0540">Nuclease</keyword>
<keyword id="KW-0547">Nucleotide-binding</keyword>
<gene>
    <name evidence="1" type="primary">addA</name>
    <name type="ordered locus">GTNG_0589</name>
</gene>
<name>ADDA_GEOTN</name>
<feature type="chain" id="PRO_0000379273" description="ATP-dependent helicase/nuclease subunit A">
    <location>
        <begin position="1"/>
        <end position="1242"/>
    </location>
</feature>
<feature type="domain" description="UvrD-like helicase ATP-binding" evidence="1">
    <location>
        <begin position="12"/>
        <end position="487"/>
    </location>
</feature>
<feature type="domain" description="UvrD-like helicase C-terminal" evidence="1">
    <location>
        <begin position="514"/>
        <end position="808"/>
    </location>
</feature>
<feature type="binding site" evidence="1">
    <location>
        <begin position="33"/>
        <end position="40"/>
    </location>
    <ligand>
        <name>ATP</name>
        <dbReference type="ChEBI" id="CHEBI:30616"/>
    </ligand>
</feature>
<reference key="1">
    <citation type="journal article" date="2007" name="Proc. Natl. Acad. Sci. U.S.A.">
        <title>Genome and proteome of long-chain alkane degrading Geobacillus thermodenitrificans NG80-2 isolated from a deep-subsurface oil reservoir.</title>
        <authorList>
            <person name="Feng L."/>
            <person name="Wang W."/>
            <person name="Cheng J."/>
            <person name="Ren Y."/>
            <person name="Zhao G."/>
            <person name="Gao C."/>
            <person name="Tang Y."/>
            <person name="Liu X."/>
            <person name="Han W."/>
            <person name="Peng X."/>
            <person name="Liu R."/>
            <person name="Wang L."/>
        </authorList>
    </citation>
    <scope>NUCLEOTIDE SEQUENCE [LARGE SCALE GENOMIC DNA]</scope>
    <source>
        <strain>NG80-2</strain>
    </source>
</reference>
<protein>
    <recommendedName>
        <fullName evidence="1">ATP-dependent helicase/nuclease subunit A</fullName>
        <ecNumber evidence="1">3.1.-.-</ecNumber>
        <ecNumber evidence="1">5.6.2.4</ecNumber>
    </recommendedName>
    <alternativeName>
        <fullName evidence="1">ATP-dependent helicase/nuclease AddA</fullName>
    </alternativeName>
    <alternativeName>
        <fullName evidence="1">DNA 3'-5' helicase AddA</fullName>
    </alternativeName>
</protein>
<dbReference type="EC" id="3.1.-.-" evidence="1"/>
<dbReference type="EC" id="5.6.2.4" evidence="1"/>
<dbReference type="EMBL" id="CP000557">
    <property type="protein sequence ID" value="ABO65971.1"/>
    <property type="molecule type" value="Genomic_DNA"/>
</dbReference>
<dbReference type="RefSeq" id="WP_011886886.1">
    <property type="nucleotide sequence ID" value="NC_009328.1"/>
</dbReference>
<dbReference type="SMR" id="A4IKW7"/>
<dbReference type="KEGG" id="gtn:GTNG_0589"/>
<dbReference type="eggNOG" id="COG1074">
    <property type="taxonomic scope" value="Bacteria"/>
</dbReference>
<dbReference type="HOGENOM" id="CLU_001114_3_1_9"/>
<dbReference type="Proteomes" id="UP000001578">
    <property type="component" value="Chromosome"/>
</dbReference>
<dbReference type="GO" id="GO:0005829">
    <property type="term" value="C:cytosol"/>
    <property type="evidence" value="ECO:0007669"/>
    <property type="project" value="TreeGrafter"/>
</dbReference>
<dbReference type="GO" id="GO:0033202">
    <property type="term" value="C:DNA helicase complex"/>
    <property type="evidence" value="ECO:0007669"/>
    <property type="project" value="TreeGrafter"/>
</dbReference>
<dbReference type="GO" id="GO:0043138">
    <property type="term" value="F:3'-5' DNA helicase activity"/>
    <property type="evidence" value="ECO:0007669"/>
    <property type="project" value="UniProtKB-UniRule"/>
</dbReference>
<dbReference type="GO" id="GO:0008408">
    <property type="term" value="F:3'-5' exonuclease activity"/>
    <property type="evidence" value="ECO:0007669"/>
    <property type="project" value="UniProtKB-UniRule"/>
</dbReference>
<dbReference type="GO" id="GO:0005524">
    <property type="term" value="F:ATP binding"/>
    <property type="evidence" value="ECO:0007669"/>
    <property type="project" value="UniProtKB-UniRule"/>
</dbReference>
<dbReference type="GO" id="GO:0016887">
    <property type="term" value="F:ATP hydrolysis activity"/>
    <property type="evidence" value="ECO:0007669"/>
    <property type="project" value="RHEA"/>
</dbReference>
<dbReference type="GO" id="GO:0003690">
    <property type="term" value="F:double-stranded DNA binding"/>
    <property type="evidence" value="ECO:0007669"/>
    <property type="project" value="UniProtKB-UniRule"/>
</dbReference>
<dbReference type="GO" id="GO:0000724">
    <property type="term" value="P:double-strand break repair via homologous recombination"/>
    <property type="evidence" value="ECO:0007669"/>
    <property type="project" value="UniProtKB-UniRule"/>
</dbReference>
<dbReference type="CDD" id="cd17932">
    <property type="entry name" value="DEXQc_UvrD"/>
    <property type="match status" value="1"/>
</dbReference>
<dbReference type="FunFam" id="3.40.50.300:FF:001196">
    <property type="entry name" value="ATP-dependent helicase/nuclease subunit A"/>
    <property type="match status" value="1"/>
</dbReference>
<dbReference type="FunFam" id="3.40.50.300:FF:001236">
    <property type="entry name" value="ATP-dependent helicase/nuclease subunit A"/>
    <property type="match status" value="1"/>
</dbReference>
<dbReference type="Gene3D" id="3.90.320.10">
    <property type="match status" value="1"/>
</dbReference>
<dbReference type="Gene3D" id="3.40.50.300">
    <property type="entry name" value="P-loop containing nucleotide triphosphate hydrolases"/>
    <property type="match status" value="4"/>
</dbReference>
<dbReference type="HAMAP" id="MF_01451">
    <property type="entry name" value="AddA"/>
    <property type="match status" value="1"/>
</dbReference>
<dbReference type="InterPro" id="IPR014152">
    <property type="entry name" value="AddA"/>
</dbReference>
<dbReference type="InterPro" id="IPR014017">
    <property type="entry name" value="DNA_helicase_UvrD-like_C"/>
</dbReference>
<dbReference type="InterPro" id="IPR000212">
    <property type="entry name" value="DNA_helicase_UvrD/REP"/>
</dbReference>
<dbReference type="InterPro" id="IPR027417">
    <property type="entry name" value="P-loop_NTPase"/>
</dbReference>
<dbReference type="InterPro" id="IPR011604">
    <property type="entry name" value="PDDEXK-like_dom_sf"/>
</dbReference>
<dbReference type="InterPro" id="IPR038726">
    <property type="entry name" value="PDDEXK_AddAB-type"/>
</dbReference>
<dbReference type="InterPro" id="IPR011335">
    <property type="entry name" value="Restrct_endonuc-II-like"/>
</dbReference>
<dbReference type="InterPro" id="IPR014016">
    <property type="entry name" value="UvrD-like_ATP-bd"/>
</dbReference>
<dbReference type="NCBIfam" id="TIGR02785">
    <property type="entry name" value="addA_Gpos"/>
    <property type="match status" value="1"/>
</dbReference>
<dbReference type="PANTHER" id="PTHR11070:SF48">
    <property type="entry name" value="ATP-DEPENDENT HELICASE_NUCLEASE SUBUNIT A"/>
    <property type="match status" value="1"/>
</dbReference>
<dbReference type="PANTHER" id="PTHR11070">
    <property type="entry name" value="UVRD / RECB / PCRA DNA HELICASE FAMILY MEMBER"/>
    <property type="match status" value="1"/>
</dbReference>
<dbReference type="Pfam" id="PF12705">
    <property type="entry name" value="PDDEXK_1"/>
    <property type="match status" value="1"/>
</dbReference>
<dbReference type="Pfam" id="PF00580">
    <property type="entry name" value="UvrD-helicase"/>
    <property type="match status" value="1"/>
</dbReference>
<dbReference type="Pfam" id="PF13361">
    <property type="entry name" value="UvrD_C"/>
    <property type="match status" value="1"/>
</dbReference>
<dbReference type="SUPFAM" id="SSF52540">
    <property type="entry name" value="P-loop containing nucleoside triphosphate hydrolases"/>
    <property type="match status" value="1"/>
</dbReference>
<dbReference type="SUPFAM" id="SSF52980">
    <property type="entry name" value="Restriction endonuclease-like"/>
    <property type="match status" value="1"/>
</dbReference>
<dbReference type="PROSITE" id="PS51198">
    <property type="entry name" value="UVRD_HELICASE_ATP_BIND"/>
    <property type="match status" value="1"/>
</dbReference>
<dbReference type="PROSITE" id="PS51217">
    <property type="entry name" value="UVRD_HELICASE_CTER"/>
    <property type="match status" value="1"/>
</dbReference>
<accession>A4IKW7</accession>
<comment type="function">
    <text evidence="1">The heterodimer acts as both an ATP-dependent DNA helicase and an ATP-dependent, dual-direction single-stranded exonuclease. Recognizes the chi site generating a DNA molecule suitable for the initiation of homologous recombination. The AddA nuclease domain is required for chi fragment generation; this subunit has the helicase and 3' -&gt; 5' nuclease activities.</text>
</comment>
<comment type="catalytic activity">
    <reaction evidence="1">
        <text>Couples ATP hydrolysis with the unwinding of duplex DNA by translocating in the 3'-5' direction.</text>
        <dbReference type="EC" id="5.6.2.4"/>
    </reaction>
</comment>
<comment type="catalytic activity">
    <reaction evidence="1">
        <text>ATP + H2O = ADP + phosphate + H(+)</text>
        <dbReference type="Rhea" id="RHEA:13065"/>
        <dbReference type="ChEBI" id="CHEBI:15377"/>
        <dbReference type="ChEBI" id="CHEBI:15378"/>
        <dbReference type="ChEBI" id="CHEBI:30616"/>
        <dbReference type="ChEBI" id="CHEBI:43474"/>
        <dbReference type="ChEBI" id="CHEBI:456216"/>
        <dbReference type="EC" id="5.6.2.4"/>
    </reaction>
</comment>
<comment type="cofactor">
    <cofactor evidence="1">
        <name>Mg(2+)</name>
        <dbReference type="ChEBI" id="CHEBI:18420"/>
    </cofactor>
</comment>
<comment type="subunit">
    <text evidence="1">Heterodimer of AddA and AddB/RexB.</text>
</comment>
<comment type="similarity">
    <text evidence="1">Belongs to the helicase family. AddA subfamily.</text>
</comment>
<evidence type="ECO:0000255" key="1">
    <source>
        <dbReference type="HAMAP-Rule" id="MF_01451"/>
    </source>
</evidence>